<dbReference type="EMBL" id="CU928161">
    <property type="protein sequence ID" value="CAR03178.1"/>
    <property type="molecule type" value="Genomic_DNA"/>
</dbReference>
<dbReference type="RefSeq" id="WP_000156257.1">
    <property type="nucleotide sequence ID" value="NC_011742.1"/>
</dbReference>
<dbReference type="SMR" id="B7MBM6"/>
<dbReference type="KEGG" id="ecz:ECS88_1872"/>
<dbReference type="HOGENOM" id="CLU_133645_0_0_6"/>
<dbReference type="Proteomes" id="UP000000747">
    <property type="component" value="Chromosome"/>
</dbReference>
<dbReference type="GO" id="GO:0005886">
    <property type="term" value="C:plasma membrane"/>
    <property type="evidence" value="ECO:0007669"/>
    <property type="project" value="UniProtKB-SubCell"/>
</dbReference>
<dbReference type="HAMAP" id="MF_01071">
    <property type="entry name" value="UPF0266"/>
    <property type="match status" value="1"/>
</dbReference>
<dbReference type="InterPro" id="IPR009328">
    <property type="entry name" value="DUF986"/>
</dbReference>
<dbReference type="NCBIfam" id="NF002791">
    <property type="entry name" value="PRK02913.1"/>
    <property type="match status" value="1"/>
</dbReference>
<dbReference type="Pfam" id="PF06173">
    <property type="entry name" value="DUF986"/>
    <property type="match status" value="1"/>
</dbReference>
<dbReference type="PIRSF" id="PIRSF020687">
    <property type="entry name" value="UCP020687"/>
    <property type="match status" value="1"/>
</dbReference>
<keyword id="KW-0997">Cell inner membrane</keyword>
<keyword id="KW-1003">Cell membrane</keyword>
<keyword id="KW-0472">Membrane</keyword>
<keyword id="KW-1185">Reference proteome</keyword>
<keyword id="KW-0812">Transmembrane</keyword>
<keyword id="KW-1133">Transmembrane helix</keyword>
<feature type="chain" id="PRO_1000136635" description="UPF0266 membrane protein YobD">
    <location>
        <begin position="1"/>
        <end position="152"/>
    </location>
</feature>
<feature type="transmembrane region" description="Helical" evidence="1">
    <location>
        <begin position="6"/>
        <end position="26"/>
    </location>
</feature>
<feature type="transmembrane region" description="Helical" evidence="1">
    <location>
        <begin position="45"/>
        <end position="65"/>
    </location>
</feature>
<feature type="transmembrane region" description="Helical" evidence="1">
    <location>
        <begin position="67"/>
        <end position="87"/>
    </location>
</feature>
<protein>
    <recommendedName>
        <fullName evidence="1">UPF0266 membrane protein YobD</fullName>
    </recommendedName>
</protein>
<proteinExistence type="inferred from homology"/>
<sequence length="152" mass="17601">MTITDLVLILFIAALLAFAIYDQFIMPRRNGPTLLAIPLLRRGRIDSVIFVGLIVILIYNNVTNHGALITTWLLSALALMGFYIFWIRVPKIIFKQKGFFFANVWIEYSRIKAMNLSEDGVLVMQLEQRRLLIRVRNIDDLEKVYKLLVSTQ</sequence>
<evidence type="ECO:0000255" key="1">
    <source>
        <dbReference type="HAMAP-Rule" id="MF_01071"/>
    </source>
</evidence>
<gene>
    <name evidence="1" type="primary">yobD</name>
    <name type="ordered locus">ECS88_1872</name>
</gene>
<name>YOBD_ECO45</name>
<comment type="subcellular location">
    <subcellularLocation>
        <location evidence="1">Cell inner membrane</location>
        <topology evidence="1">Multi-pass membrane protein</topology>
    </subcellularLocation>
</comment>
<comment type="similarity">
    <text evidence="1">Belongs to the UPF0266 family.</text>
</comment>
<organism>
    <name type="scientific">Escherichia coli O45:K1 (strain S88 / ExPEC)</name>
    <dbReference type="NCBI Taxonomy" id="585035"/>
    <lineage>
        <taxon>Bacteria</taxon>
        <taxon>Pseudomonadati</taxon>
        <taxon>Pseudomonadota</taxon>
        <taxon>Gammaproteobacteria</taxon>
        <taxon>Enterobacterales</taxon>
        <taxon>Enterobacteriaceae</taxon>
        <taxon>Escherichia</taxon>
    </lineage>
</organism>
<reference key="1">
    <citation type="journal article" date="2009" name="PLoS Genet.">
        <title>Organised genome dynamics in the Escherichia coli species results in highly diverse adaptive paths.</title>
        <authorList>
            <person name="Touchon M."/>
            <person name="Hoede C."/>
            <person name="Tenaillon O."/>
            <person name="Barbe V."/>
            <person name="Baeriswyl S."/>
            <person name="Bidet P."/>
            <person name="Bingen E."/>
            <person name="Bonacorsi S."/>
            <person name="Bouchier C."/>
            <person name="Bouvet O."/>
            <person name="Calteau A."/>
            <person name="Chiapello H."/>
            <person name="Clermont O."/>
            <person name="Cruveiller S."/>
            <person name="Danchin A."/>
            <person name="Diard M."/>
            <person name="Dossat C."/>
            <person name="Karoui M.E."/>
            <person name="Frapy E."/>
            <person name="Garry L."/>
            <person name="Ghigo J.M."/>
            <person name="Gilles A.M."/>
            <person name="Johnson J."/>
            <person name="Le Bouguenec C."/>
            <person name="Lescat M."/>
            <person name="Mangenot S."/>
            <person name="Martinez-Jehanne V."/>
            <person name="Matic I."/>
            <person name="Nassif X."/>
            <person name="Oztas S."/>
            <person name="Petit M.A."/>
            <person name="Pichon C."/>
            <person name="Rouy Z."/>
            <person name="Ruf C.S."/>
            <person name="Schneider D."/>
            <person name="Tourret J."/>
            <person name="Vacherie B."/>
            <person name="Vallenet D."/>
            <person name="Medigue C."/>
            <person name="Rocha E.P.C."/>
            <person name="Denamur E."/>
        </authorList>
    </citation>
    <scope>NUCLEOTIDE SEQUENCE [LARGE SCALE GENOMIC DNA]</scope>
    <source>
        <strain>S88 / ExPEC</strain>
    </source>
</reference>
<accession>B7MBM6</accession>